<organism>
    <name type="scientific">Paraburkholderia xenovorans (strain LB400)</name>
    <dbReference type="NCBI Taxonomy" id="266265"/>
    <lineage>
        <taxon>Bacteria</taxon>
        <taxon>Pseudomonadati</taxon>
        <taxon>Pseudomonadota</taxon>
        <taxon>Betaproteobacteria</taxon>
        <taxon>Burkholderiales</taxon>
        <taxon>Burkholderiaceae</taxon>
        <taxon>Paraburkholderia</taxon>
    </lineage>
</organism>
<gene>
    <name evidence="1" type="primary">atpF</name>
    <name type="ordered locus">Bxeno_A4353</name>
    <name type="ORF">Bxe_A0036</name>
</gene>
<name>ATPF_PARXL</name>
<reference key="1">
    <citation type="journal article" date="2006" name="Proc. Natl. Acad. Sci. U.S.A.">
        <title>Burkholderia xenovorans LB400 harbors a multi-replicon, 9.73-Mbp genome shaped for versatility.</title>
        <authorList>
            <person name="Chain P.S.G."/>
            <person name="Denef V.J."/>
            <person name="Konstantinidis K.T."/>
            <person name="Vergez L.M."/>
            <person name="Agullo L."/>
            <person name="Reyes V.L."/>
            <person name="Hauser L."/>
            <person name="Cordova M."/>
            <person name="Gomez L."/>
            <person name="Gonzalez M."/>
            <person name="Land M."/>
            <person name="Lao V."/>
            <person name="Larimer F."/>
            <person name="LiPuma J.J."/>
            <person name="Mahenthiralingam E."/>
            <person name="Malfatti S.A."/>
            <person name="Marx C.J."/>
            <person name="Parnell J.J."/>
            <person name="Ramette A."/>
            <person name="Richardson P."/>
            <person name="Seeger M."/>
            <person name="Smith D."/>
            <person name="Spilker T."/>
            <person name="Sul W.J."/>
            <person name="Tsoi T.V."/>
            <person name="Ulrich L.E."/>
            <person name="Zhulin I.B."/>
            <person name="Tiedje J.M."/>
        </authorList>
    </citation>
    <scope>NUCLEOTIDE SEQUENCE [LARGE SCALE GENOMIC DNA]</scope>
    <source>
        <strain>LB400</strain>
    </source>
</reference>
<evidence type="ECO:0000255" key="1">
    <source>
        <dbReference type="HAMAP-Rule" id="MF_01398"/>
    </source>
</evidence>
<feature type="chain" id="PRO_0000368398" description="ATP synthase subunit b">
    <location>
        <begin position="1"/>
        <end position="156"/>
    </location>
</feature>
<feature type="transmembrane region" description="Helical" evidence="1">
    <location>
        <begin position="7"/>
        <end position="27"/>
    </location>
</feature>
<dbReference type="EMBL" id="CP000270">
    <property type="protein sequence ID" value="ABE32891.1"/>
    <property type="molecule type" value="Genomic_DNA"/>
</dbReference>
<dbReference type="RefSeq" id="WP_007180032.1">
    <property type="nucleotide sequence ID" value="NZ_CP008760.1"/>
</dbReference>
<dbReference type="SMR" id="Q13SP8"/>
<dbReference type="STRING" id="266265.Bxe_A0036"/>
<dbReference type="KEGG" id="bxb:DR64_2215"/>
<dbReference type="KEGG" id="bxe:Bxe_A0036"/>
<dbReference type="eggNOG" id="COG0711">
    <property type="taxonomic scope" value="Bacteria"/>
</dbReference>
<dbReference type="OrthoDB" id="9788020at2"/>
<dbReference type="Proteomes" id="UP000001817">
    <property type="component" value="Chromosome 1"/>
</dbReference>
<dbReference type="GO" id="GO:0005886">
    <property type="term" value="C:plasma membrane"/>
    <property type="evidence" value="ECO:0007669"/>
    <property type="project" value="UniProtKB-SubCell"/>
</dbReference>
<dbReference type="GO" id="GO:0045259">
    <property type="term" value="C:proton-transporting ATP synthase complex"/>
    <property type="evidence" value="ECO:0007669"/>
    <property type="project" value="UniProtKB-KW"/>
</dbReference>
<dbReference type="GO" id="GO:0046933">
    <property type="term" value="F:proton-transporting ATP synthase activity, rotational mechanism"/>
    <property type="evidence" value="ECO:0007669"/>
    <property type="project" value="UniProtKB-UniRule"/>
</dbReference>
<dbReference type="GO" id="GO:0046961">
    <property type="term" value="F:proton-transporting ATPase activity, rotational mechanism"/>
    <property type="evidence" value="ECO:0007669"/>
    <property type="project" value="TreeGrafter"/>
</dbReference>
<dbReference type="CDD" id="cd06503">
    <property type="entry name" value="ATP-synt_Fo_b"/>
    <property type="match status" value="1"/>
</dbReference>
<dbReference type="Gene3D" id="6.10.250.1580">
    <property type="match status" value="1"/>
</dbReference>
<dbReference type="HAMAP" id="MF_01398">
    <property type="entry name" value="ATP_synth_b_bprime"/>
    <property type="match status" value="1"/>
</dbReference>
<dbReference type="InterPro" id="IPR028987">
    <property type="entry name" value="ATP_synth_B-like_membr_sf"/>
</dbReference>
<dbReference type="InterPro" id="IPR002146">
    <property type="entry name" value="ATP_synth_b/b'su_bac/chlpt"/>
</dbReference>
<dbReference type="InterPro" id="IPR005864">
    <property type="entry name" value="ATP_synth_F0_bsu_bac"/>
</dbReference>
<dbReference type="InterPro" id="IPR050059">
    <property type="entry name" value="ATP_synthase_B_chain"/>
</dbReference>
<dbReference type="NCBIfam" id="TIGR01144">
    <property type="entry name" value="ATP_synt_b"/>
    <property type="match status" value="1"/>
</dbReference>
<dbReference type="NCBIfam" id="NF004411">
    <property type="entry name" value="PRK05759.1-2"/>
    <property type="match status" value="1"/>
</dbReference>
<dbReference type="PANTHER" id="PTHR33445:SF1">
    <property type="entry name" value="ATP SYNTHASE SUBUNIT B"/>
    <property type="match status" value="1"/>
</dbReference>
<dbReference type="PANTHER" id="PTHR33445">
    <property type="entry name" value="ATP SYNTHASE SUBUNIT B', CHLOROPLASTIC"/>
    <property type="match status" value="1"/>
</dbReference>
<dbReference type="Pfam" id="PF00430">
    <property type="entry name" value="ATP-synt_B"/>
    <property type="match status" value="1"/>
</dbReference>
<dbReference type="SUPFAM" id="SSF81573">
    <property type="entry name" value="F1F0 ATP synthase subunit B, membrane domain"/>
    <property type="match status" value="1"/>
</dbReference>
<keyword id="KW-0066">ATP synthesis</keyword>
<keyword id="KW-0997">Cell inner membrane</keyword>
<keyword id="KW-1003">Cell membrane</keyword>
<keyword id="KW-0138">CF(0)</keyword>
<keyword id="KW-0375">Hydrogen ion transport</keyword>
<keyword id="KW-0406">Ion transport</keyword>
<keyword id="KW-0472">Membrane</keyword>
<keyword id="KW-1185">Reference proteome</keyword>
<keyword id="KW-0812">Transmembrane</keyword>
<keyword id="KW-1133">Transmembrane helix</keyword>
<keyword id="KW-0813">Transport</keyword>
<comment type="function">
    <text evidence="1">F(1)F(0) ATP synthase produces ATP from ADP in the presence of a proton or sodium gradient. F-type ATPases consist of two structural domains, F(1) containing the extramembraneous catalytic core and F(0) containing the membrane proton channel, linked together by a central stalk and a peripheral stalk. During catalysis, ATP synthesis in the catalytic domain of F(1) is coupled via a rotary mechanism of the central stalk subunits to proton translocation.</text>
</comment>
<comment type="function">
    <text evidence="1">Component of the F(0) channel, it forms part of the peripheral stalk, linking F(1) to F(0).</text>
</comment>
<comment type="subunit">
    <text evidence="1">F-type ATPases have 2 components, F(1) - the catalytic core - and F(0) - the membrane proton channel. F(1) has five subunits: alpha(3), beta(3), gamma(1), delta(1), epsilon(1). F(0) has three main subunits: a(1), b(2) and c(10-14). The alpha and beta chains form an alternating ring which encloses part of the gamma chain. F(1) is attached to F(0) by a central stalk formed by the gamma and epsilon chains, while a peripheral stalk is formed by the delta and b chains.</text>
</comment>
<comment type="subcellular location">
    <subcellularLocation>
        <location evidence="1">Cell inner membrane</location>
        <topology evidence="1">Single-pass membrane protein</topology>
    </subcellularLocation>
</comment>
<comment type="similarity">
    <text evidence="1">Belongs to the ATPase B chain family.</text>
</comment>
<proteinExistence type="inferred from homology"/>
<sequence length="156" mass="17036">MNLNATLFAQMVVFLILAWFTMKFVWPPLINALDERSKKIADGLSAAEKGKAELEAAHKRVDQELAQARNDGQQRVADAEKRAVAVADEIKAQAQAEAARIIAQAKADAEQQVVKARETLRGEVAALAVKGAEQILKREVDQAAHADLLNQLKAEL</sequence>
<accession>Q13SP8</accession>
<protein>
    <recommendedName>
        <fullName evidence="1">ATP synthase subunit b</fullName>
    </recommendedName>
    <alternativeName>
        <fullName evidence="1">ATP synthase F(0) sector subunit b</fullName>
    </alternativeName>
    <alternativeName>
        <fullName evidence="1">ATPase subunit I</fullName>
    </alternativeName>
    <alternativeName>
        <fullName evidence="1">F-type ATPase subunit b</fullName>
        <shortName evidence="1">F-ATPase subunit b</shortName>
    </alternativeName>
</protein>